<sequence>MKMKYFHHPSGLLPRLLLLLLLTMGAVACTKEDNPDQPTSDEVATVKMSLDDVEMRGGDLYSGEDLIKKVRIFVFREGLNGLWVLDKQKLFASGQSDFQNPFTISAHAGPRQIYVIANEPDALTTKLDKILFKKELEDMQAPDVNEPIVRPFTMTGMATATLNPQGTVQANISLNRIAAKITLDIKQVTPGSDVIKITKVQILRNAKNSRLLEGTNKPTGYWNWANACDLPLTNNGSAQSIIQASAPLYVYENIGSDSDSSGRATQLVVEALYNGIKTRYYAYVNDKTTTANHHYSIRRNHHYKLDGTITKMGEFSSLLLTTTVLPWTVENLDYGFLVPYVAEINPHAVITQDNVVTFENSLSFTVRIKGRDGSRWKATLDNGLEFGFDSGSAIDGAADGTTVYTIKVKALKPNGIGIQRRTNLFFTVDGKKVILDKNINPQPTDIKIIQQGL</sequence>
<proteinExistence type="inferred from homology"/>
<gene>
    <name evidence="5" type="primary">fimC</name>
</gene>
<keyword id="KW-0998">Cell outer membrane</keyword>
<keyword id="KW-0281">Fimbrium</keyword>
<keyword id="KW-0449">Lipoprotein</keyword>
<keyword id="KW-0472">Membrane</keyword>
<keyword id="KW-0564">Palmitate</keyword>
<keyword id="KW-0732">Signal</keyword>
<keyword id="KW-0843">Virulence</keyword>
<comment type="function">
    <text evidence="1">Minor component of fimbriae. These long, filamentous pili are attached to the cell surface; they mediate biofilm formation, adhesion onto host cells and onto other bacteria that are part of the oral microbiome. They play an important role in invasion of periodontal tissues and are major virulence factors. FimC, FimD and FimE contribute to interaction with host CXCR4 and thereby down-regulate the TLR2-mediated host immune response.</text>
</comment>
<comment type="subunit">
    <text evidence="1">Fimbriae are composed of a major, structural subunit and the minor components FimC, FimD and FimE. Identified in a complex composed of FimC, FimD and FimE (in vitro). The complex interacts with host extracellular matrix proteins, including fibronectin and type I collagen. Interacts with host CXCR4.</text>
</comment>
<comment type="subcellular location">
    <subcellularLocation>
        <location evidence="1">Fimbrium</location>
    </subcellularLocation>
    <subcellularLocation>
        <location evidence="1">Cell outer membrane</location>
    </subcellularLocation>
    <text evidence="1">Probably synthesized as a palmitoylated precursor. Efficient export to the outer membrane and integration into fimbriae requires lipidation and subsequent proteolytic removal of the lipidated propeptide. Probably part of the fimbrium tip, as a part of the complex formed by FimC, FimD and FimE.</text>
</comment>
<comment type="miscellaneous">
    <text evidence="4">The name (major fimbrium subunit) does not indicate the abundance of the protein, but is derived from the greater length of the major fimbriae. In strain ATCC 33277 and strain ATCC BAA-1703 / FDC 381, major fimbriae are 300 - 1600 nM in length and about 5 nm in diameter. In contrast, minor fimbriae are only about 80 - 120 nm long. This length difference is observed only in a small number of strains, including strain ATCC 33277 and strain ATCC BAA-1703 / FDC 381, and is due to a loss of function mutation in FimB, a protein that restricts fimbrial length in other strains.</text>
</comment>
<comment type="similarity">
    <text evidence="4">Belongs to the bacteroidetes fimbrillin superfamily. FimA/Mfa1 family.</text>
</comment>
<accession>O32388</accession>
<name>FIMC_PORGN</name>
<dbReference type="EMBL" id="D42067">
    <property type="protein sequence ID" value="BAA22416.1"/>
    <property type="molecule type" value="Genomic_DNA"/>
</dbReference>
<dbReference type="RefSeq" id="WP_039417483.1">
    <property type="nucleotide sequence ID" value="NZ_JAVIVL010000003.1"/>
</dbReference>
<dbReference type="SMR" id="O32388"/>
<dbReference type="GO" id="GO:0009279">
    <property type="term" value="C:cell outer membrane"/>
    <property type="evidence" value="ECO:0007669"/>
    <property type="project" value="UniProtKB-SubCell"/>
</dbReference>
<dbReference type="GO" id="GO:0009289">
    <property type="term" value="C:pilus"/>
    <property type="evidence" value="ECO:0000250"/>
    <property type="project" value="UniProtKB"/>
</dbReference>
<dbReference type="GO" id="GO:0046810">
    <property type="term" value="F:host cell extracellular matrix binding"/>
    <property type="evidence" value="ECO:0000250"/>
    <property type="project" value="UniProtKB"/>
</dbReference>
<dbReference type="GO" id="GO:0098609">
    <property type="term" value="P:cell-cell adhesion"/>
    <property type="evidence" value="ECO:0000250"/>
    <property type="project" value="UniProtKB"/>
</dbReference>
<dbReference type="Gene3D" id="2.60.40.2580">
    <property type="match status" value="1"/>
</dbReference>
<dbReference type="InterPro" id="IPR029141">
    <property type="entry name" value="FimA_N"/>
</dbReference>
<dbReference type="Pfam" id="PF06321">
    <property type="entry name" value="P_gingi_FimA"/>
    <property type="match status" value="1"/>
</dbReference>
<dbReference type="PROSITE" id="PS51257">
    <property type="entry name" value="PROKAR_LIPOPROTEIN"/>
    <property type="match status" value="1"/>
</dbReference>
<organism evidence="5">
    <name type="scientific">Porphyromonas gingivalis</name>
    <name type="common">Bacteroides gingivalis</name>
    <dbReference type="NCBI Taxonomy" id="837"/>
    <lineage>
        <taxon>Bacteria</taxon>
        <taxon>Pseudomonadati</taxon>
        <taxon>Bacteroidota</taxon>
        <taxon>Bacteroidia</taxon>
        <taxon>Bacteroidales</taxon>
        <taxon>Porphyromonadaceae</taxon>
        <taxon>Porphyromonas</taxon>
    </lineage>
</organism>
<feature type="signal peptide" evidence="3">
    <location>
        <begin position="1"/>
        <end position="28"/>
    </location>
</feature>
<feature type="propeptide" id="PRO_0000436732" evidence="2">
    <location>
        <begin position="29"/>
        <end position="56"/>
    </location>
</feature>
<feature type="chain" id="PRO_5004158038" description="Major fimbrium subunit FimC">
    <location>
        <begin position="57"/>
        <end position="453"/>
    </location>
</feature>
<feature type="lipid moiety-binding region" description="N-palmitoyl cysteine" evidence="3">
    <location>
        <position position="29"/>
    </location>
</feature>
<feature type="lipid moiety-binding region" description="S-diacylglycerol cysteine" evidence="3">
    <location>
        <position position="29"/>
    </location>
</feature>
<evidence type="ECO:0000250" key="1">
    <source>
        <dbReference type="UniProtKB" id="B2RH57"/>
    </source>
</evidence>
<evidence type="ECO:0000255" key="2"/>
<evidence type="ECO:0000255" key="3">
    <source>
        <dbReference type="PROSITE-ProRule" id="PRU00303"/>
    </source>
</evidence>
<evidence type="ECO:0000305" key="4"/>
<evidence type="ECO:0000312" key="5">
    <source>
        <dbReference type="EMBL" id="BAA22416.1"/>
    </source>
</evidence>
<protein>
    <recommendedName>
        <fullName evidence="4">Major fimbrium subunit FimC</fullName>
    </recommendedName>
</protein>
<reference evidence="5" key="1">
    <citation type="journal article" date="1996" name="Microbiol. Immunol.">
        <title>Sequence and product analyses of the four genes downstream from the fimbrilin gene(fimA) of the oral anaerobe Porphyromonas gingivalis.</title>
        <authorList>
            <person name="Watanabe K."/>
            <person name="Onoe T."/>
            <person name="Ozeki M."/>
            <person name="Shimizu Y."/>
            <person name="Sakayori T."/>
            <person name="Nakamura H."/>
            <person name="Yoshimura F."/>
        </authorList>
    </citation>
    <scope>NUCLEOTIDE SEQUENCE [GENOMIC DNA]</scope>
    <source>
        <strain evidence="5">ATCC BAA-1703 / FDC 381</strain>
    </source>
</reference>
<reference evidence="5" key="2">
    <citation type="journal article" date="2007" name="Microbiology">
        <title>Involvement of minor components associated with the FimA fimbriae of Porphyromonas gingivalis in adhesive functions.</title>
        <authorList>
            <person name="Nishiyama S."/>
            <person name="Murakami Y."/>
            <person name="Nagata H."/>
            <person name="Shizukuishi S."/>
            <person name="Kawagishi I."/>
            <person name="Yoshimura F."/>
        </authorList>
    </citation>
    <scope>NUCLEOTIDE SEQUENCE [GENOMIC DNA]</scope>
    <source>
        <strain evidence="5">ATCC BAA-1703 / FDC 381</strain>
    </source>
</reference>